<evidence type="ECO:0000255" key="1">
    <source>
        <dbReference type="HAMAP-Rule" id="MF_00357"/>
    </source>
</evidence>
<evidence type="ECO:0000255" key="2">
    <source>
        <dbReference type="PROSITE-ProRule" id="PRU01261"/>
    </source>
</evidence>
<evidence type="ECO:0000256" key="3">
    <source>
        <dbReference type="SAM" id="MobiDB-lite"/>
    </source>
</evidence>
<organism>
    <name type="scientific">Streptococcus equi subsp. equi (strain 4047)</name>
    <dbReference type="NCBI Taxonomy" id="553482"/>
    <lineage>
        <taxon>Bacteria</taxon>
        <taxon>Bacillati</taxon>
        <taxon>Bacillota</taxon>
        <taxon>Bacilli</taxon>
        <taxon>Lactobacillales</taxon>
        <taxon>Streptococcaceae</taxon>
        <taxon>Streptococcus</taxon>
    </lineage>
</organism>
<feature type="chain" id="PRO_1000133449" description="Probable DNA-directed RNA polymerase subunit delta">
    <location>
        <begin position="1"/>
        <end position="188"/>
    </location>
</feature>
<feature type="domain" description="HTH HARE-type" evidence="2">
    <location>
        <begin position="14"/>
        <end position="83"/>
    </location>
</feature>
<feature type="region of interest" description="Disordered" evidence="3">
    <location>
        <begin position="119"/>
        <end position="188"/>
    </location>
</feature>
<dbReference type="EMBL" id="FM204883">
    <property type="protein sequence ID" value="CAW95173.1"/>
    <property type="molecule type" value="Genomic_DNA"/>
</dbReference>
<dbReference type="RefSeq" id="WP_012680108.1">
    <property type="nucleotide sequence ID" value="NC_012471.1"/>
</dbReference>
<dbReference type="SMR" id="C0M8K7"/>
<dbReference type="KEGG" id="seu:SEQ_1946"/>
<dbReference type="HOGENOM" id="CLU_116648_0_0_9"/>
<dbReference type="OrthoDB" id="401223at2"/>
<dbReference type="Proteomes" id="UP000001365">
    <property type="component" value="Chromosome"/>
</dbReference>
<dbReference type="GO" id="GO:0000428">
    <property type="term" value="C:DNA-directed RNA polymerase complex"/>
    <property type="evidence" value="ECO:0007669"/>
    <property type="project" value="UniProtKB-KW"/>
</dbReference>
<dbReference type="GO" id="GO:0003899">
    <property type="term" value="F:DNA-directed RNA polymerase activity"/>
    <property type="evidence" value="ECO:0007669"/>
    <property type="project" value="UniProtKB-UniRule"/>
</dbReference>
<dbReference type="GO" id="GO:0006351">
    <property type="term" value="P:DNA-templated transcription"/>
    <property type="evidence" value="ECO:0007669"/>
    <property type="project" value="InterPro"/>
</dbReference>
<dbReference type="GO" id="GO:0006355">
    <property type="term" value="P:regulation of DNA-templated transcription"/>
    <property type="evidence" value="ECO:0007669"/>
    <property type="project" value="UniProtKB-UniRule"/>
</dbReference>
<dbReference type="Gene3D" id="1.10.10.1250">
    <property type="entry name" value="RNA polymerase, subunit delta, N-terminal domain"/>
    <property type="match status" value="1"/>
</dbReference>
<dbReference type="HAMAP" id="MF_00357">
    <property type="entry name" value="RNApol_bact_RpoE"/>
    <property type="match status" value="1"/>
</dbReference>
<dbReference type="InterPro" id="IPR007759">
    <property type="entry name" value="Asxl_HARE-HTH"/>
</dbReference>
<dbReference type="InterPro" id="IPR038087">
    <property type="entry name" value="RNAP_delta_N_dom_sf"/>
</dbReference>
<dbReference type="InterPro" id="IPR029757">
    <property type="entry name" value="RpoE"/>
</dbReference>
<dbReference type="NCBIfam" id="TIGR04567">
    <property type="entry name" value="RNAP_delt_lowGC"/>
    <property type="match status" value="1"/>
</dbReference>
<dbReference type="Pfam" id="PF05066">
    <property type="entry name" value="HARE-HTH"/>
    <property type="match status" value="1"/>
</dbReference>
<dbReference type="PROSITE" id="PS51913">
    <property type="entry name" value="HTH_HARE"/>
    <property type="match status" value="1"/>
</dbReference>
<gene>
    <name evidence="1" type="primary">rpoE</name>
    <name type="ordered locus">SEQ_1946</name>
</gene>
<accession>C0M8K7</accession>
<proteinExistence type="inferred from homology"/>
<name>RPOE_STRE4</name>
<keyword id="KW-0240">DNA-directed RNA polymerase</keyword>
<keyword id="KW-0548">Nucleotidyltransferase</keyword>
<keyword id="KW-0804">Transcription</keyword>
<keyword id="KW-0808">Transferase</keyword>
<reference key="1">
    <citation type="journal article" date="2009" name="PLoS Pathog.">
        <title>Genomic evidence for the evolution of Streptococcus equi: host restriction, increased virulence, and genetic exchange with human pathogens.</title>
        <authorList>
            <person name="Holden M.T.G."/>
            <person name="Heather Z."/>
            <person name="Paillot R."/>
            <person name="Steward K.F."/>
            <person name="Webb K."/>
            <person name="Ainslie F."/>
            <person name="Jourdan T."/>
            <person name="Bason N.C."/>
            <person name="Holroyd N.E."/>
            <person name="Mungall K."/>
            <person name="Quail M.A."/>
            <person name="Sanders M."/>
            <person name="Simmonds M."/>
            <person name="Willey D."/>
            <person name="Brooks K."/>
            <person name="Aanensen D.M."/>
            <person name="Spratt B.G."/>
            <person name="Jolley K.A."/>
            <person name="Maiden M.C.J."/>
            <person name="Kehoe M."/>
            <person name="Chanter N."/>
            <person name="Bentley S.D."/>
            <person name="Robinson C."/>
            <person name="Maskell D.J."/>
            <person name="Parkhill J."/>
            <person name="Waller A.S."/>
        </authorList>
    </citation>
    <scope>NUCLEOTIDE SEQUENCE [LARGE SCALE GENOMIC DNA]</scope>
    <source>
        <strain>4047</strain>
    </source>
</reference>
<comment type="function">
    <text evidence="1">Participates in both the initiation and recycling phases of transcription. In the presence of the delta subunit, RNAP displays an increased specificity of transcription, a decreased affinity for nucleic acids, and an increased efficiency of RNA synthesis because of enhanced recycling.</text>
</comment>
<comment type="subunit">
    <text evidence="1">RNAP is composed of a core of 2 alpha, a beta and a beta' subunits. The core is associated with a delta subunit and one of several sigma factors.</text>
</comment>
<comment type="similarity">
    <text evidence="1">Belongs to the RpoE family.</text>
</comment>
<protein>
    <recommendedName>
        <fullName evidence="1">Probable DNA-directed RNA polymerase subunit delta</fullName>
    </recommendedName>
    <alternativeName>
        <fullName evidence="1">RNAP delta factor</fullName>
    </alternativeName>
</protein>
<sequence>MKLDVFAGQEISELSMIEVARAILEERGRDNDMYFSDLVNEIQNYLGKSDADIRYALPFFYTDLNTDGSFIPLGENKWGLRSWYAIDEIDEEIITLEDEEDGAPKRKKKRVNAFMDGDEDAIDYSADDPEDEDFVRESSDIEYDEEDPDDEKSEVESYDSELNEIIPEDDFEEVDLNEEDEEDEEEEE</sequence>